<gene>
    <name type="primary">Tp53inp2</name>
    <name type="synonym">Dor</name>
    <name type="synonym">Trp53inp2</name>
</gene>
<protein>
    <recommendedName>
        <fullName>Tumor protein p53-inducible nuclear protein 2</fullName>
    </recommendedName>
    <alternativeName>
        <fullName>Diabetes and obesity-regulated gene</fullName>
    </alternativeName>
</protein>
<dbReference type="EMBL" id="AJ297794">
    <property type="protein sequence ID" value="CAC82596.1"/>
    <property type="molecule type" value="mRNA"/>
</dbReference>
<dbReference type="SMR" id="Q8CHM3"/>
<dbReference type="FunCoup" id="Q8CHM3">
    <property type="interactions" value="243"/>
</dbReference>
<dbReference type="STRING" id="10116.ENSRNOP00000052180"/>
<dbReference type="PhosphoSitePlus" id="Q8CHM3"/>
<dbReference type="PaxDb" id="10116-ENSRNOP00000052180"/>
<dbReference type="PeptideAtlas" id="Q8CHM3"/>
<dbReference type="UCSC" id="RGD:735085">
    <property type="organism name" value="rat"/>
</dbReference>
<dbReference type="AGR" id="RGD:735085"/>
<dbReference type="RGD" id="735085">
    <property type="gene designation" value="Tp53inp2"/>
</dbReference>
<dbReference type="eggNOG" id="ENOG502RZHB">
    <property type="taxonomic scope" value="Eukaryota"/>
</dbReference>
<dbReference type="InParanoid" id="Q8CHM3"/>
<dbReference type="PhylomeDB" id="Q8CHM3"/>
<dbReference type="Proteomes" id="UP000002494">
    <property type="component" value="Unplaced"/>
</dbReference>
<dbReference type="GO" id="GO:0005776">
    <property type="term" value="C:autophagosome"/>
    <property type="evidence" value="ECO:0000250"/>
    <property type="project" value="UniProtKB"/>
</dbReference>
<dbReference type="GO" id="GO:0031410">
    <property type="term" value="C:cytoplasmic vesicle"/>
    <property type="evidence" value="ECO:0007669"/>
    <property type="project" value="UniProtKB-KW"/>
</dbReference>
<dbReference type="GO" id="GO:0005829">
    <property type="term" value="C:cytosol"/>
    <property type="evidence" value="ECO:0000250"/>
    <property type="project" value="UniProtKB"/>
</dbReference>
<dbReference type="GO" id="GO:0005634">
    <property type="term" value="C:nucleus"/>
    <property type="evidence" value="ECO:0000250"/>
    <property type="project" value="UniProtKB"/>
</dbReference>
<dbReference type="GO" id="GO:0016605">
    <property type="term" value="C:PML body"/>
    <property type="evidence" value="ECO:0007669"/>
    <property type="project" value="UniProtKB-SubCell"/>
</dbReference>
<dbReference type="GO" id="GO:0043130">
    <property type="term" value="F:ubiquitin binding"/>
    <property type="evidence" value="ECO:0000266"/>
    <property type="project" value="RGD"/>
</dbReference>
<dbReference type="GO" id="GO:0000045">
    <property type="term" value="P:autophagosome assembly"/>
    <property type="evidence" value="ECO:0000250"/>
    <property type="project" value="UniProtKB"/>
</dbReference>
<dbReference type="GO" id="GO:0016236">
    <property type="term" value="P:macroautophagy"/>
    <property type="evidence" value="ECO:0000266"/>
    <property type="project" value="RGD"/>
</dbReference>
<dbReference type="GO" id="GO:1903828">
    <property type="term" value="P:negative regulation of protein localization"/>
    <property type="evidence" value="ECO:0000266"/>
    <property type="project" value="RGD"/>
</dbReference>
<dbReference type="GO" id="GO:0001649">
    <property type="term" value="P:osteoblast differentiation"/>
    <property type="evidence" value="ECO:0000266"/>
    <property type="project" value="RGD"/>
</dbReference>
<dbReference type="GO" id="GO:0045893">
    <property type="term" value="P:positive regulation of DNA-templated transcription"/>
    <property type="evidence" value="ECO:0000250"/>
    <property type="project" value="UniProtKB"/>
</dbReference>
<dbReference type="GO" id="GO:0008104">
    <property type="term" value="P:protein localization"/>
    <property type="evidence" value="ECO:0000266"/>
    <property type="project" value="RGD"/>
</dbReference>
<dbReference type="GO" id="GO:0001894">
    <property type="term" value="P:tissue homeostasis"/>
    <property type="evidence" value="ECO:0000266"/>
    <property type="project" value="RGD"/>
</dbReference>
<dbReference type="GO" id="GO:0006511">
    <property type="term" value="P:ubiquitin-dependent protein catabolic process"/>
    <property type="evidence" value="ECO:0000266"/>
    <property type="project" value="RGD"/>
</dbReference>
<dbReference type="InterPro" id="IPR029431">
    <property type="entry name" value="TP53INP"/>
</dbReference>
<dbReference type="PANTHER" id="PTHR31671">
    <property type="entry name" value="DIABETES AND OBESITY REGULATED, ISOFORM G"/>
    <property type="match status" value="1"/>
</dbReference>
<dbReference type="PANTHER" id="PTHR31671:SF2">
    <property type="entry name" value="TUMOR PROTEIN P53-INDUCIBLE NUCLEAR PROTEIN 2"/>
    <property type="match status" value="1"/>
</dbReference>
<dbReference type="Pfam" id="PF14839">
    <property type="entry name" value="DOR"/>
    <property type="match status" value="1"/>
</dbReference>
<accession>Q8CHM3</accession>
<feature type="chain" id="PRO_0000072411" description="Tumor protein p53-inducible nuclear protein 2">
    <location>
        <begin position="1"/>
        <end position="199" status="greater than"/>
    </location>
</feature>
<feature type="region of interest" description="Disordered" evidence="3">
    <location>
        <begin position="41"/>
        <end position="69"/>
    </location>
</feature>
<feature type="region of interest" description="Disordered" evidence="3">
    <location>
        <begin position="117"/>
        <end position="153"/>
    </location>
</feature>
<feature type="region of interest" description="Disordered" evidence="3">
    <location>
        <begin position="173"/>
        <end position="199"/>
    </location>
</feature>
<feature type="short sequence motif" description="LIR">
    <location>
        <begin position="26"/>
        <end position="41"/>
    </location>
</feature>
<feature type="compositionally biased region" description="Pro residues" evidence="3">
    <location>
        <begin position="47"/>
        <end position="64"/>
    </location>
</feature>
<feature type="modified residue" description="Phosphoserine" evidence="2">
    <location>
        <position position="136"/>
    </location>
</feature>
<feature type="non-terminal residue">
    <location>
        <position position="199"/>
    </location>
</feature>
<evidence type="ECO:0000250" key="1"/>
<evidence type="ECO:0000250" key="2">
    <source>
        <dbReference type="UniProtKB" id="Q8IXH6"/>
    </source>
</evidence>
<evidence type="ECO:0000256" key="3">
    <source>
        <dbReference type="SAM" id="MobiDB-lite"/>
    </source>
</evidence>
<evidence type="ECO:0000269" key="4">
    <source>
    </source>
</evidence>
<reference key="1">
    <citation type="journal article" date="2007" name="PLoS ONE">
        <title>Identification of a novel modulator of thyroid hormone receptor-mediated action.</title>
        <authorList>
            <person name="Baumgartner B.G."/>
            <person name="Orpinell M."/>
            <person name="Duran J."/>
            <person name="Ribas V."/>
            <person name="Burghardt H.E."/>
            <person name="Bach D."/>
            <person name="Villar A.V."/>
            <person name="Paz J.C."/>
            <person name="Gonzalez M."/>
            <person name="Camps M."/>
            <person name="Oriola J."/>
            <person name="Rivera F."/>
            <person name="Palacin M."/>
            <person name="Zorzano A."/>
        </authorList>
    </citation>
    <scope>NUCLEOTIDE SEQUENCE [MRNA]</scope>
    <scope>FUNCTION</scope>
    <scope>SUBCELLULAR LOCATION</scope>
    <scope>TISSUE SPECIFICITY</scope>
    <source>
        <tissue>Muscle</tissue>
    </source>
</reference>
<organism>
    <name type="scientific">Rattus norvegicus</name>
    <name type="common">Rat</name>
    <dbReference type="NCBI Taxonomy" id="10116"/>
    <lineage>
        <taxon>Eukaryota</taxon>
        <taxon>Metazoa</taxon>
        <taxon>Chordata</taxon>
        <taxon>Craniata</taxon>
        <taxon>Vertebrata</taxon>
        <taxon>Euteleostomi</taxon>
        <taxon>Mammalia</taxon>
        <taxon>Eutheria</taxon>
        <taxon>Euarchontoglires</taxon>
        <taxon>Glires</taxon>
        <taxon>Rodentia</taxon>
        <taxon>Myomorpha</taxon>
        <taxon>Muroidea</taxon>
        <taxon>Muridae</taxon>
        <taxon>Murinae</taxon>
        <taxon>Rattus</taxon>
    </lineage>
</organism>
<keyword id="KW-0010">Activator</keyword>
<keyword id="KW-0072">Autophagy</keyword>
<keyword id="KW-0963">Cytoplasm</keyword>
<keyword id="KW-0968">Cytoplasmic vesicle</keyword>
<keyword id="KW-0539">Nucleus</keyword>
<keyword id="KW-0597">Phosphoprotein</keyword>
<keyword id="KW-1185">Reference proteome</keyword>
<keyword id="KW-0804">Transcription</keyword>
<keyword id="KW-0805">Transcription regulation</keyword>
<proteinExistence type="evidence at transcript level"/>
<sequence length="199" mass="21624">MFQRFTSLFFSTPAPPEDSNCPGAFVSEEDEVDGWLIIDLQDSYTAPPDPRASPAPAGRPPPAPSLMDESWFVTPPACFTAEGPGLGPARLQSNPLEDLLIEHPSMSVYVTGSTIVLESGPPSPHPEAALPDQDLSDGELAPARREPRALHHAAAPMPARAVLLEKAGQVRRLQRARQRAERHTLSAKVLQRQNRARES</sequence>
<name>T53I2_RAT</name>
<comment type="function">
    <text evidence="4">Dual regulator of transcription and autophagy. Positively regulates autophagy and is required for autophagosome formation and processing. May act as a scaffold protein that recruits MAP1LC3A, GABARAP and GABARAPL2 and brings them to the autophagosome membrane by interacting with VMP1 where, in cooperation with the BECN1-PI3-kinase class III complex, they trigger autophagosome development. Acts as a transcriptional activator of THRA.</text>
</comment>
<comment type="subunit">
    <text evidence="1">Interacts with VMP1, GABARAP, GABARAPL1, GABARAPL2, MAP1LC3A, MAP1LC3B, MAP1LC3C and THRA.</text>
</comment>
<comment type="subcellular location">
    <subcellularLocation>
        <location evidence="1">Cytoplasm</location>
        <location evidence="1">Cytosol</location>
    </subcellularLocation>
    <subcellularLocation>
        <location evidence="1">Nucleus</location>
    </subcellularLocation>
    <subcellularLocation>
        <location evidence="1">Nucleus</location>
        <location evidence="1">PML body</location>
    </subcellularLocation>
    <subcellularLocation>
        <location evidence="1">Cytoplasmic vesicle</location>
        <location evidence="1">Autophagosome</location>
    </subcellularLocation>
    <text evidence="1">Shuttles between the nucleus and the cytoplasm, depending on cellular stress conditions, and re-localizes to autophagosomes on autophagy activation.</text>
</comment>
<comment type="tissue specificity">
    <text evidence="4">Abundantly expressed in skeletal muscle and heart and expression is highly repressed in muscle from obese diabetic rats.</text>
</comment>
<comment type="domain">
    <text evidence="1">The LC3 interacting region (LIR) motif mediates interaction with GABARAP, GABARAPL1, GABARAPL2, MAP1LC3A, MAP1LC3B and MAP1LC3C.</text>
</comment>